<name>TTC23_MOUSE</name>
<sequence length="488" mass="54608">MQESQDTHMSSHLDEVVAAVSVTSKNRIPNKLLQTALFQPPREKLHLCEERAKSYSSSREYKQAIQELVRCVALTRICYGDWHWKLAEAYVNLAQGYLQLKGLSLQAKQHAEKAKEILANSIESPCHNKTDIFKCSLELFYTLGRALLSLQKFKDASENLIKAERLSKEMLQCGNIVKEEWIEIQSRIKLSFAQLYQGQKRSKEAFPFYQKALEYTEITKDEKSLECVQVLRELAGVEQALGLYAAAISHFSRDRLPTPQPCPLGHKCCCPSPFLSPVLNVTWRPFYSSQVDEEEAHLIILSKDPSPEEAADSAHFIARAAAASGMHDHRDVAEKYFQESMTSIKDSEGAERAKFLSIQDEFCSFLQTTGQKERAAMILRESLEAKVGAFGDFSPEVAETYRALGRADLAQGNNSGAYAKLKKCVQIETFLYGSQDKKTLATQHTIDTLSKISEAAGKSRQSVKAKVAFCTSAPQYGMPGKGRHSVAD</sequence>
<dbReference type="EMBL" id="AK005431">
    <property type="protein sequence ID" value="BAB24025.1"/>
    <property type="molecule type" value="mRNA"/>
</dbReference>
<dbReference type="EMBL" id="BC038179">
    <property type="protein sequence ID" value="AAH38179.1"/>
    <property type="molecule type" value="mRNA"/>
</dbReference>
<dbReference type="CCDS" id="CCDS21352.1">
    <molecule id="Q8CHY7-1"/>
</dbReference>
<dbReference type="RefSeq" id="NP_001161947.1">
    <property type="nucleotide sequence ID" value="NM_001168475.1"/>
</dbReference>
<dbReference type="RefSeq" id="NP_001161948.1">
    <molecule id="Q8CHY7-2"/>
    <property type="nucleotide sequence ID" value="NM_001168476.1"/>
</dbReference>
<dbReference type="RefSeq" id="NP_080181.2">
    <molecule id="Q8CHY7-1"/>
    <property type="nucleotide sequence ID" value="NM_025905.3"/>
</dbReference>
<dbReference type="RefSeq" id="XP_036009267.1">
    <molecule id="Q8CHY7-2"/>
    <property type="nucleotide sequence ID" value="XM_036153374.1"/>
</dbReference>
<dbReference type="SMR" id="Q8CHY7"/>
<dbReference type="BioGRID" id="211872">
    <property type="interactions" value="130"/>
</dbReference>
<dbReference type="FunCoup" id="Q8CHY7">
    <property type="interactions" value="119"/>
</dbReference>
<dbReference type="STRING" id="10090.ENSMUSP00000032774"/>
<dbReference type="iPTMnet" id="Q8CHY7"/>
<dbReference type="PhosphoSitePlus" id="Q8CHY7"/>
<dbReference type="PaxDb" id="10090-ENSMUSP00000032774"/>
<dbReference type="ProteomicsDB" id="297672">
    <molecule id="Q8CHY7-1"/>
</dbReference>
<dbReference type="ProteomicsDB" id="297673">
    <molecule id="Q8CHY7-2"/>
</dbReference>
<dbReference type="Antibodypedia" id="29144">
    <property type="antibodies" value="173 antibodies from 24 providers"/>
</dbReference>
<dbReference type="Ensembl" id="ENSMUST00000032774.16">
    <molecule id="Q8CHY7-1"/>
    <property type="protein sequence ID" value="ENSMUSP00000032774.9"/>
    <property type="gene ID" value="ENSMUSG00000030555.17"/>
</dbReference>
<dbReference type="GeneID" id="67009"/>
<dbReference type="KEGG" id="mmu:67009"/>
<dbReference type="UCSC" id="uc009his.2">
    <molecule id="Q8CHY7-1"/>
    <property type="organism name" value="mouse"/>
</dbReference>
<dbReference type="UCSC" id="uc009hiu.2">
    <molecule id="Q8CHY7-2"/>
    <property type="organism name" value="mouse"/>
</dbReference>
<dbReference type="AGR" id="MGI:1914259"/>
<dbReference type="CTD" id="64927"/>
<dbReference type="MGI" id="MGI:1914259">
    <property type="gene designation" value="Ttc23"/>
</dbReference>
<dbReference type="VEuPathDB" id="HostDB:ENSMUSG00000030555"/>
<dbReference type="eggNOG" id="ENOG502RQY0">
    <property type="taxonomic scope" value="Eukaryota"/>
</dbReference>
<dbReference type="GeneTree" id="ENSGT00530000063847"/>
<dbReference type="HOGENOM" id="CLU_030458_0_0_1"/>
<dbReference type="InParanoid" id="Q8CHY7"/>
<dbReference type="OMA" id="VYKDMAA"/>
<dbReference type="OrthoDB" id="9986634at2759"/>
<dbReference type="PhylomeDB" id="Q8CHY7"/>
<dbReference type="TreeFam" id="TF332604"/>
<dbReference type="BioGRID-ORCS" id="67009">
    <property type="hits" value="4 hits in 75 CRISPR screens"/>
</dbReference>
<dbReference type="ChiTaRS" id="Ttc23">
    <property type="organism name" value="mouse"/>
</dbReference>
<dbReference type="PRO" id="PR:Q8CHY7"/>
<dbReference type="Proteomes" id="UP000000589">
    <property type="component" value="Chromosome 7"/>
</dbReference>
<dbReference type="RNAct" id="Q8CHY7">
    <property type="molecule type" value="protein"/>
</dbReference>
<dbReference type="Bgee" id="ENSMUSG00000030555">
    <property type="expression patterns" value="Expressed in ventricular zone and 186 other cell types or tissues"/>
</dbReference>
<dbReference type="ExpressionAtlas" id="Q8CHY7">
    <property type="expression patterns" value="baseline and differential"/>
</dbReference>
<dbReference type="GO" id="GO:0005929">
    <property type="term" value="C:cilium"/>
    <property type="evidence" value="ECO:0000315"/>
    <property type="project" value="UniProtKB"/>
</dbReference>
<dbReference type="GO" id="GO:0045880">
    <property type="term" value="P:positive regulation of smoothened signaling pathway"/>
    <property type="evidence" value="ECO:0000315"/>
    <property type="project" value="UniProtKB"/>
</dbReference>
<dbReference type="Gene3D" id="1.25.40.10">
    <property type="entry name" value="Tetratricopeptide repeat domain"/>
    <property type="match status" value="3"/>
</dbReference>
<dbReference type="InterPro" id="IPR011990">
    <property type="entry name" value="TPR-like_helical_dom_sf"/>
</dbReference>
<dbReference type="InterPro" id="IPR019734">
    <property type="entry name" value="TPR_rpt"/>
</dbReference>
<dbReference type="InterPro" id="IPR042621">
    <property type="entry name" value="TTC23/TTC23L"/>
</dbReference>
<dbReference type="PANTHER" id="PTHR14485">
    <property type="entry name" value="TETRATRICOPEPTIDE REPEAT PROTEIN 23"/>
    <property type="match status" value="1"/>
</dbReference>
<dbReference type="PANTHER" id="PTHR14485:SF3">
    <property type="entry name" value="TETRATRICOPEPTIDE REPEAT PROTEIN 23"/>
    <property type="match status" value="1"/>
</dbReference>
<dbReference type="Pfam" id="PF13181">
    <property type="entry name" value="TPR_8"/>
    <property type="match status" value="1"/>
</dbReference>
<dbReference type="SMART" id="SM00028">
    <property type="entry name" value="TPR"/>
    <property type="match status" value="4"/>
</dbReference>
<dbReference type="SUPFAM" id="SSF48452">
    <property type="entry name" value="TPR-like"/>
    <property type="match status" value="1"/>
</dbReference>
<protein>
    <recommendedName>
        <fullName>Tetratricopeptide repeat protein 23</fullName>
        <shortName>TPR repeat protein 23</shortName>
    </recommendedName>
</protein>
<feature type="chain" id="PRO_0000289549" description="Tetratricopeptide repeat protein 23">
    <location>
        <begin position="1"/>
        <end position="488"/>
    </location>
</feature>
<feature type="repeat" description="TPR 1">
    <location>
        <begin position="45"/>
        <end position="78"/>
    </location>
</feature>
<feature type="repeat" description="TPR 2">
    <location>
        <begin position="137"/>
        <end position="170"/>
    </location>
</feature>
<feature type="repeat" description="TPR 3">
    <location>
        <begin position="186"/>
        <end position="219"/>
    </location>
</feature>
<feature type="repeat" description="TPR 4">
    <location>
        <begin position="228"/>
        <end position="261"/>
    </location>
</feature>
<feature type="repeat" description="TPR 5">
    <location>
        <begin position="398"/>
        <end position="431"/>
    </location>
</feature>
<feature type="splice variant" id="VSP_026019" description="In isoform 2." evidence="2">
    <location>
        <begin position="1"/>
        <end position="169"/>
    </location>
</feature>
<feature type="splice variant" id="VSP_026020" description="In isoform 2." evidence="2">
    <location>
        <begin position="254"/>
        <end position="295"/>
    </location>
</feature>
<organism>
    <name type="scientific">Mus musculus</name>
    <name type="common">Mouse</name>
    <dbReference type="NCBI Taxonomy" id="10090"/>
    <lineage>
        <taxon>Eukaryota</taxon>
        <taxon>Metazoa</taxon>
        <taxon>Chordata</taxon>
        <taxon>Craniata</taxon>
        <taxon>Vertebrata</taxon>
        <taxon>Euteleostomi</taxon>
        <taxon>Mammalia</taxon>
        <taxon>Eutheria</taxon>
        <taxon>Euarchontoglires</taxon>
        <taxon>Glires</taxon>
        <taxon>Rodentia</taxon>
        <taxon>Myomorpha</taxon>
        <taxon>Muroidea</taxon>
        <taxon>Muridae</taxon>
        <taxon>Murinae</taxon>
        <taxon>Mus</taxon>
        <taxon>Mus</taxon>
    </lineage>
</organism>
<gene>
    <name type="primary">Ttc23</name>
</gene>
<reference key="1">
    <citation type="journal article" date="2005" name="Science">
        <title>The transcriptional landscape of the mammalian genome.</title>
        <authorList>
            <person name="Carninci P."/>
            <person name="Kasukawa T."/>
            <person name="Katayama S."/>
            <person name="Gough J."/>
            <person name="Frith M.C."/>
            <person name="Maeda N."/>
            <person name="Oyama R."/>
            <person name="Ravasi T."/>
            <person name="Lenhard B."/>
            <person name="Wells C."/>
            <person name="Kodzius R."/>
            <person name="Shimokawa K."/>
            <person name="Bajic V.B."/>
            <person name="Brenner S.E."/>
            <person name="Batalov S."/>
            <person name="Forrest A.R."/>
            <person name="Zavolan M."/>
            <person name="Davis M.J."/>
            <person name="Wilming L.G."/>
            <person name="Aidinis V."/>
            <person name="Allen J.E."/>
            <person name="Ambesi-Impiombato A."/>
            <person name="Apweiler R."/>
            <person name="Aturaliya R.N."/>
            <person name="Bailey T.L."/>
            <person name="Bansal M."/>
            <person name="Baxter L."/>
            <person name="Beisel K.W."/>
            <person name="Bersano T."/>
            <person name="Bono H."/>
            <person name="Chalk A.M."/>
            <person name="Chiu K.P."/>
            <person name="Choudhary V."/>
            <person name="Christoffels A."/>
            <person name="Clutterbuck D.R."/>
            <person name="Crowe M.L."/>
            <person name="Dalla E."/>
            <person name="Dalrymple B.P."/>
            <person name="de Bono B."/>
            <person name="Della Gatta G."/>
            <person name="di Bernardo D."/>
            <person name="Down T."/>
            <person name="Engstrom P."/>
            <person name="Fagiolini M."/>
            <person name="Faulkner G."/>
            <person name="Fletcher C.F."/>
            <person name="Fukushima T."/>
            <person name="Furuno M."/>
            <person name="Futaki S."/>
            <person name="Gariboldi M."/>
            <person name="Georgii-Hemming P."/>
            <person name="Gingeras T.R."/>
            <person name="Gojobori T."/>
            <person name="Green R.E."/>
            <person name="Gustincich S."/>
            <person name="Harbers M."/>
            <person name="Hayashi Y."/>
            <person name="Hensch T.K."/>
            <person name="Hirokawa N."/>
            <person name="Hill D."/>
            <person name="Huminiecki L."/>
            <person name="Iacono M."/>
            <person name="Ikeo K."/>
            <person name="Iwama A."/>
            <person name="Ishikawa T."/>
            <person name="Jakt M."/>
            <person name="Kanapin A."/>
            <person name="Katoh M."/>
            <person name="Kawasawa Y."/>
            <person name="Kelso J."/>
            <person name="Kitamura H."/>
            <person name="Kitano H."/>
            <person name="Kollias G."/>
            <person name="Krishnan S.P."/>
            <person name="Kruger A."/>
            <person name="Kummerfeld S.K."/>
            <person name="Kurochkin I.V."/>
            <person name="Lareau L.F."/>
            <person name="Lazarevic D."/>
            <person name="Lipovich L."/>
            <person name="Liu J."/>
            <person name="Liuni S."/>
            <person name="McWilliam S."/>
            <person name="Madan Babu M."/>
            <person name="Madera M."/>
            <person name="Marchionni L."/>
            <person name="Matsuda H."/>
            <person name="Matsuzawa S."/>
            <person name="Miki H."/>
            <person name="Mignone F."/>
            <person name="Miyake S."/>
            <person name="Morris K."/>
            <person name="Mottagui-Tabar S."/>
            <person name="Mulder N."/>
            <person name="Nakano N."/>
            <person name="Nakauchi H."/>
            <person name="Ng P."/>
            <person name="Nilsson R."/>
            <person name="Nishiguchi S."/>
            <person name="Nishikawa S."/>
            <person name="Nori F."/>
            <person name="Ohara O."/>
            <person name="Okazaki Y."/>
            <person name="Orlando V."/>
            <person name="Pang K.C."/>
            <person name="Pavan W.J."/>
            <person name="Pavesi G."/>
            <person name="Pesole G."/>
            <person name="Petrovsky N."/>
            <person name="Piazza S."/>
            <person name="Reed J."/>
            <person name="Reid J.F."/>
            <person name="Ring B.Z."/>
            <person name="Ringwald M."/>
            <person name="Rost B."/>
            <person name="Ruan Y."/>
            <person name="Salzberg S.L."/>
            <person name="Sandelin A."/>
            <person name="Schneider C."/>
            <person name="Schoenbach C."/>
            <person name="Sekiguchi K."/>
            <person name="Semple C.A."/>
            <person name="Seno S."/>
            <person name="Sessa L."/>
            <person name="Sheng Y."/>
            <person name="Shibata Y."/>
            <person name="Shimada H."/>
            <person name="Shimada K."/>
            <person name="Silva D."/>
            <person name="Sinclair B."/>
            <person name="Sperling S."/>
            <person name="Stupka E."/>
            <person name="Sugiura K."/>
            <person name="Sultana R."/>
            <person name="Takenaka Y."/>
            <person name="Taki K."/>
            <person name="Tammoja K."/>
            <person name="Tan S.L."/>
            <person name="Tang S."/>
            <person name="Taylor M.S."/>
            <person name="Tegner J."/>
            <person name="Teichmann S.A."/>
            <person name="Ueda H.R."/>
            <person name="van Nimwegen E."/>
            <person name="Verardo R."/>
            <person name="Wei C.L."/>
            <person name="Yagi K."/>
            <person name="Yamanishi H."/>
            <person name="Zabarovsky E."/>
            <person name="Zhu S."/>
            <person name="Zimmer A."/>
            <person name="Hide W."/>
            <person name="Bult C."/>
            <person name="Grimmond S.M."/>
            <person name="Teasdale R.D."/>
            <person name="Liu E.T."/>
            <person name="Brusic V."/>
            <person name="Quackenbush J."/>
            <person name="Wahlestedt C."/>
            <person name="Mattick J.S."/>
            <person name="Hume D.A."/>
            <person name="Kai C."/>
            <person name="Sasaki D."/>
            <person name="Tomaru Y."/>
            <person name="Fukuda S."/>
            <person name="Kanamori-Katayama M."/>
            <person name="Suzuki M."/>
            <person name="Aoki J."/>
            <person name="Arakawa T."/>
            <person name="Iida J."/>
            <person name="Imamura K."/>
            <person name="Itoh M."/>
            <person name="Kato T."/>
            <person name="Kawaji H."/>
            <person name="Kawagashira N."/>
            <person name="Kawashima T."/>
            <person name="Kojima M."/>
            <person name="Kondo S."/>
            <person name="Konno H."/>
            <person name="Nakano K."/>
            <person name="Ninomiya N."/>
            <person name="Nishio T."/>
            <person name="Okada M."/>
            <person name="Plessy C."/>
            <person name="Shibata K."/>
            <person name="Shiraki T."/>
            <person name="Suzuki S."/>
            <person name="Tagami M."/>
            <person name="Waki K."/>
            <person name="Watahiki A."/>
            <person name="Okamura-Oho Y."/>
            <person name="Suzuki H."/>
            <person name="Kawai J."/>
            <person name="Hayashizaki Y."/>
        </authorList>
    </citation>
    <scope>NUCLEOTIDE SEQUENCE [LARGE SCALE MRNA] (ISOFORM 2)</scope>
    <source>
        <strain>C57BL/6J</strain>
        <tissue>Placenta</tissue>
    </source>
</reference>
<reference key="2">
    <citation type="journal article" date="2004" name="Genome Res.">
        <title>The status, quality, and expansion of the NIH full-length cDNA project: the Mammalian Gene Collection (MGC).</title>
        <authorList>
            <consortium name="The MGC Project Team"/>
        </authorList>
    </citation>
    <scope>NUCLEOTIDE SEQUENCE [LARGE SCALE MRNA] (ISOFORM 1)</scope>
    <source>
        <strain>FVB/N</strain>
        <tissue>Mammary tumor</tissue>
    </source>
</reference>
<reference key="3">
    <citation type="journal article" date="2018" name="Nat. Genet.">
        <title>A CRISPR-based screen for Hedgehog signaling provides insights into ciliary function and ciliopathies.</title>
        <authorList>
            <person name="Breslow D.K."/>
            <person name="Hoogendoorn S."/>
            <person name="Kopp A.R."/>
            <person name="Morgens D.W."/>
            <person name="Vu B.K."/>
            <person name="Kennedy M.C."/>
            <person name="Han K."/>
            <person name="Li A."/>
            <person name="Hess G.T."/>
            <person name="Bassik M.C."/>
            <person name="Chen J.K."/>
            <person name="Nachury M.V."/>
        </authorList>
    </citation>
    <scope>SUBCELLULAR LOCATION</scope>
    <scope>FUNCTION</scope>
    <scope>SUBUNIT</scope>
    <scope>IDENTIFICATION BY MASS SPECTROMETRY</scope>
</reference>
<evidence type="ECO:0000269" key="1">
    <source>
    </source>
</evidence>
<evidence type="ECO:0000303" key="2">
    <source>
    </source>
</evidence>
<keyword id="KW-0025">Alternative splicing</keyword>
<keyword id="KW-0966">Cell projection</keyword>
<keyword id="KW-1185">Reference proteome</keyword>
<keyword id="KW-0677">Repeat</keyword>
<keyword id="KW-0802">TPR repeat</keyword>
<proteinExistence type="evidence at protein level"/>
<accession>Q8CHY7</accession>
<accession>Q9DAY3</accession>
<comment type="function">
    <text evidence="1">Participates positively in the ciliary Hedgehog (Hh) signaling.</text>
</comment>
<comment type="subunit">
    <text evidence="1">Associated with the EvC complex composed of EFCAB7, IQCE, EVC2 and EVC.</text>
</comment>
<comment type="subcellular location">
    <subcellularLocation>
        <location evidence="1">Cell projection</location>
        <location evidence="1">Cilium</location>
    </subcellularLocation>
    <text evidence="1">Colocalizes with EVC and IQCE at the EvC zone of primary cilia.</text>
</comment>
<comment type="alternative products">
    <event type="alternative splicing"/>
    <isoform>
        <id>Q8CHY7-1</id>
        <name>1</name>
        <sequence type="displayed"/>
    </isoform>
    <isoform>
        <id>Q8CHY7-2</id>
        <name>2</name>
        <sequence type="described" ref="VSP_026019 VSP_026020"/>
    </isoform>
</comment>